<protein>
    <recommendedName>
        <fullName evidence="1">Large ribosomal subunit protein bL20c</fullName>
    </recommendedName>
    <alternativeName>
        <fullName evidence="2">50S ribosomal protein L20, chloroplastic</fullName>
    </alternativeName>
</protein>
<geneLocation type="chloroplast"/>
<gene>
    <name evidence="1" type="primary">rpl20</name>
</gene>
<dbReference type="EMBL" id="EF508371">
    <property type="protein sequence ID" value="ABO70808.1"/>
    <property type="molecule type" value="Genomic_DNA"/>
</dbReference>
<dbReference type="RefSeq" id="YP_001293563.1">
    <property type="nucleotide sequence ID" value="NC_009573.1"/>
</dbReference>
<dbReference type="SMR" id="A6MVY4"/>
<dbReference type="GeneID" id="5228619"/>
<dbReference type="GO" id="GO:0009507">
    <property type="term" value="C:chloroplast"/>
    <property type="evidence" value="ECO:0007669"/>
    <property type="project" value="UniProtKB-SubCell"/>
</dbReference>
<dbReference type="GO" id="GO:1990904">
    <property type="term" value="C:ribonucleoprotein complex"/>
    <property type="evidence" value="ECO:0007669"/>
    <property type="project" value="UniProtKB-KW"/>
</dbReference>
<dbReference type="GO" id="GO:0005840">
    <property type="term" value="C:ribosome"/>
    <property type="evidence" value="ECO:0007669"/>
    <property type="project" value="UniProtKB-KW"/>
</dbReference>
<dbReference type="GO" id="GO:0019843">
    <property type="term" value="F:rRNA binding"/>
    <property type="evidence" value="ECO:0007669"/>
    <property type="project" value="UniProtKB-UniRule"/>
</dbReference>
<dbReference type="GO" id="GO:0003735">
    <property type="term" value="F:structural constituent of ribosome"/>
    <property type="evidence" value="ECO:0007669"/>
    <property type="project" value="InterPro"/>
</dbReference>
<dbReference type="GO" id="GO:0000027">
    <property type="term" value="P:ribosomal large subunit assembly"/>
    <property type="evidence" value="ECO:0007669"/>
    <property type="project" value="UniProtKB-UniRule"/>
</dbReference>
<dbReference type="GO" id="GO:0006412">
    <property type="term" value="P:translation"/>
    <property type="evidence" value="ECO:0007669"/>
    <property type="project" value="InterPro"/>
</dbReference>
<dbReference type="CDD" id="cd07026">
    <property type="entry name" value="Ribosomal_L20"/>
    <property type="match status" value="1"/>
</dbReference>
<dbReference type="FunFam" id="1.10.1900.20:FF:000001">
    <property type="entry name" value="50S ribosomal protein L20"/>
    <property type="match status" value="1"/>
</dbReference>
<dbReference type="Gene3D" id="6.10.160.10">
    <property type="match status" value="1"/>
</dbReference>
<dbReference type="Gene3D" id="1.10.1900.20">
    <property type="entry name" value="Ribosomal protein L20"/>
    <property type="match status" value="1"/>
</dbReference>
<dbReference type="HAMAP" id="MF_00382">
    <property type="entry name" value="Ribosomal_bL20"/>
    <property type="match status" value="1"/>
</dbReference>
<dbReference type="InterPro" id="IPR005813">
    <property type="entry name" value="Ribosomal_bL20"/>
</dbReference>
<dbReference type="InterPro" id="IPR049946">
    <property type="entry name" value="RIBOSOMAL_L20_CS"/>
</dbReference>
<dbReference type="InterPro" id="IPR035566">
    <property type="entry name" value="Ribosomal_protein_bL20_C"/>
</dbReference>
<dbReference type="NCBIfam" id="TIGR01032">
    <property type="entry name" value="rplT_bact"/>
    <property type="match status" value="1"/>
</dbReference>
<dbReference type="PANTHER" id="PTHR10986">
    <property type="entry name" value="39S RIBOSOMAL PROTEIN L20"/>
    <property type="match status" value="1"/>
</dbReference>
<dbReference type="Pfam" id="PF00453">
    <property type="entry name" value="Ribosomal_L20"/>
    <property type="match status" value="1"/>
</dbReference>
<dbReference type="PRINTS" id="PR00062">
    <property type="entry name" value="RIBOSOMALL20"/>
</dbReference>
<dbReference type="SUPFAM" id="SSF74731">
    <property type="entry name" value="Ribosomal protein L20"/>
    <property type="match status" value="1"/>
</dbReference>
<dbReference type="PROSITE" id="PS00937">
    <property type="entry name" value="RIBOSOMAL_L20"/>
    <property type="match status" value="1"/>
</dbReference>
<comment type="function">
    <text evidence="1">Binds directly to 23S ribosomal RNA and is necessary for the in vitro assembly process of the 50S ribosomal subunit. It is not involved in the protein synthesizing functions of that subunit.</text>
</comment>
<comment type="subcellular location">
    <subcellularLocation>
        <location>Plastid</location>
        <location>Chloroplast</location>
    </subcellularLocation>
</comment>
<comment type="similarity">
    <text evidence="1">Belongs to the bacterial ribosomal protein bL20 family.</text>
</comment>
<feature type="chain" id="PRO_0000355529" description="Large ribosomal subunit protein bL20c">
    <location>
        <begin position="1"/>
        <end position="116"/>
    </location>
</feature>
<name>RK20_RHDSA</name>
<evidence type="ECO:0000255" key="1">
    <source>
        <dbReference type="HAMAP-Rule" id="MF_00382"/>
    </source>
</evidence>
<evidence type="ECO:0000305" key="2"/>
<reference key="1">
    <citation type="journal article" date="2007" name="Mol. Biol. Evol.">
        <title>Plastid genome sequence of the cryptophyte alga Rhodomonas salina CCMP1319: lateral transfer of putative DNA replication machinery and a test of chromist plastid phylogeny.</title>
        <authorList>
            <person name="Khan H."/>
            <person name="Parks N."/>
            <person name="Kozera C."/>
            <person name="Curtis B.A."/>
            <person name="Parsons B.J."/>
            <person name="Bowman S."/>
            <person name="Archibald J.M."/>
        </authorList>
    </citation>
    <scope>NUCLEOTIDE SEQUENCE [LARGE SCALE GENOMIC DNA]</scope>
    <source>
        <strain>CCMP1319 / NEPCC76 / CS-174</strain>
    </source>
</reference>
<proteinExistence type="inferred from homology"/>
<sequence length="116" mass="13285">MPRIKRGNVAVKRRKKILKRAKGFRGTHSKLFRVANQQVMKALRYAYVGRKRKKREFRSLWITRINAAARLNGTKYSSVIHSLKESKIAINRKMLAQMAVADPDSFVKVLSSAKAS</sequence>
<organism>
    <name type="scientific">Rhodomonas salina</name>
    <name type="common">Cryptomonas salina</name>
    <dbReference type="NCBI Taxonomy" id="52970"/>
    <lineage>
        <taxon>Eukaryota</taxon>
        <taxon>Cryptophyceae</taxon>
        <taxon>Pyrenomonadales</taxon>
        <taxon>Pyrenomonadaceae</taxon>
        <taxon>Rhodomonas</taxon>
    </lineage>
</organism>
<accession>A6MVY4</accession>
<keyword id="KW-0150">Chloroplast</keyword>
<keyword id="KW-0934">Plastid</keyword>
<keyword id="KW-0687">Ribonucleoprotein</keyword>
<keyword id="KW-0689">Ribosomal protein</keyword>
<keyword id="KW-0694">RNA-binding</keyword>
<keyword id="KW-0699">rRNA-binding</keyword>